<evidence type="ECO:0000250" key="1">
    <source>
        <dbReference type="UniProtKB" id="P56761"/>
    </source>
</evidence>
<evidence type="ECO:0000255" key="2">
    <source>
        <dbReference type="HAMAP-Rule" id="MF_01383"/>
    </source>
</evidence>
<evidence type="ECO:0000305" key="3"/>
<name>PSBD_ORYSA</name>
<proteinExistence type="inferred from homology"/>
<protein>
    <recommendedName>
        <fullName evidence="2">Photosystem II D2 protein</fullName>
        <shortName evidence="2">PSII D2 protein</shortName>
        <ecNumber evidence="2">1.10.3.9</ecNumber>
    </recommendedName>
    <alternativeName>
        <fullName evidence="2">Photosystem Q(A) protein</fullName>
    </alternativeName>
</protein>
<organism>
    <name type="scientific">Oryza sativa</name>
    <name type="common">Rice</name>
    <dbReference type="NCBI Taxonomy" id="4530"/>
    <lineage>
        <taxon>Eukaryota</taxon>
        <taxon>Viridiplantae</taxon>
        <taxon>Streptophyta</taxon>
        <taxon>Embryophyta</taxon>
        <taxon>Tracheophyta</taxon>
        <taxon>Spermatophyta</taxon>
        <taxon>Magnoliopsida</taxon>
        <taxon>Liliopsida</taxon>
        <taxon>Poales</taxon>
        <taxon>Poaceae</taxon>
        <taxon>BOP clade</taxon>
        <taxon>Oryzoideae</taxon>
        <taxon>Oryzeae</taxon>
        <taxon>Oryzinae</taxon>
        <taxon>Oryza</taxon>
    </lineage>
</organism>
<keyword id="KW-0007">Acetylation</keyword>
<keyword id="KW-0148">Chlorophyll</keyword>
<keyword id="KW-0150">Chloroplast</keyword>
<keyword id="KW-0157">Chromophore</keyword>
<keyword id="KW-0249">Electron transport</keyword>
<keyword id="KW-0408">Iron</keyword>
<keyword id="KW-0460">Magnesium</keyword>
<keyword id="KW-0472">Membrane</keyword>
<keyword id="KW-0479">Metal-binding</keyword>
<keyword id="KW-0560">Oxidoreductase</keyword>
<keyword id="KW-0597">Phosphoprotein</keyword>
<keyword id="KW-0602">Photosynthesis</keyword>
<keyword id="KW-0604">Photosystem II</keyword>
<keyword id="KW-0934">Plastid</keyword>
<keyword id="KW-0793">Thylakoid</keyword>
<keyword id="KW-0812">Transmembrane</keyword>
<keyword id="KW-1133">Transmembrane helix</keyword>
<keyword id="KW-0813">Transport</keyword>
<comment type="function">
    <text evidence="2">Photosystem II (PSII) is a light-driven water:plastoquinone oxidoreductase that uses light energy to abstract electrons from H(2)O, generating O(2) and a proton gradient subsequently used for ATP formation. It consists of a core antenna complex that captures photons, and an electron transfer chain that converts photonic excitation into a charge separation. The D1/D2 (PsbA/PsbD) reaction center heterodimer binds P680, the primary electron donor of PSII as well as several subsequent electron acceptors. D2 is needed for assembly of a stable PSII complex.</text>
</comment>
<comment type="catalytic activity">
    <reaction evidence="2">
        <text>2 a plastoquinone + 4 hnu + 2 H2O = 2 a plastoquinol + O2</text>
        <dbReference type="Rhea" id="RHEA:36359"/>
        <dbReference type="Rhea" id="RHEA-COMP:9561"/>
        <dbReference type="Rhea" id="RHEA-COMP:9562"/>
        <dbReference type="ChEBI" id="CHEBI:15377"/>
        <dbReference type="ChEBI" id="CHEBI:15379"/>
        <dbReference type="ChEBI" id="CHEBI:17757"/>
        <dbReference type="ChEBI" id="CHEBI:30212"/>
        <dbReference type="ChEBI" id="CHEBI:62192"/>
        <dbReference type="EC" id="1.10.3.9"/>
    </reaction>
</comment>
<comment type="cofactor">
    <text evidence="2">The D1/D2 heterodimer binds P680, chlorophylls that are the primary electron donor of PSII, and subsequent electron acceptors. It shares a non-heme iron and each subunit binds pheophytin, quinone, additional chlorophylls, carotenoids and lipids. There is also a Cl(-1) ion associated with D1 and D2, which is required for oxygen evolution. The PSII complex binds additional chlorophylls, carotenoids and specific lipids.</text>
</comment>
<comment type="subunit">
    <text evidence="2">PSII is composed of 1 copy each of membrane proteins PsbA, PsbB, PsbC, PsbD, PsbE, PsbF, PsbH, PsbI, PsbJ, PsbK, PsbL, PsbM, PsbT, PsbX, PsbY, PsbZ, Psb30/Ycf12, at least 3 peripheral proteins of the oxygen-evolving complex and a large number of cofactors. It forms dimeric complexes.</text>
</comment>
<comment type="subcellular location">
    <subcellularLocation>
        <location evidence="2">Plastid</location>
        <location evidence="2">Chloroplast thylakoid membrane</location>
        <topology evidence="2">Multi-pass membrane protein</topology>
    </subcellularLocation>
</comment>
<comment type="miscellaneous">
    <text evidence="2">2 of the reaction center chlorophylls (ChlD1 and ChlD2) are entirely coordinated by water.</text>
</comment>
<comment type="similarity">
    <text evidence="2">Belongs to the reaction center PufL/M/PsbA/D family.</text>
</comment>
<comment type="sequence caution" evidence="3">
    <conflict type="erroneous initiation">
        <sequence resource="EMBL-CDS" id="AAS46171"/>
    </conflict>
    <text>Extended N-terminus.</text>
</comment>
<accession>P0C435</accession>
<accession>P12095</accession>
<accession>Q6QY23</accession>
<accession>Q6QY86</accession>
<geneLocation type="chloroplast"/>
<gene>
    <name evidence="2" type="primary">psbD</name>
    <name type="ORF">PA018</name>
</gene>
<reference key="1">
    <citation type="journal article" date="2004" name="Plant Physiol.">
        <title>A comparison of rice chloroplast genomes.</title>
        <authorList>
            <person name="Tang J."/>
            <person name="Xia H."/>
            <person name="Cao M."/>
            <person name="Zhang X."/>
            <person name="Zeng W."/>
            <person name="Hu S."/>
            <person name="Tong W."/>
            <person name="Wang J."/>
            <person name="Wang J."/>
            <person name="Yu J."/>
            <person name="Yang H."/>
            <person name="Zhu L."/>
        </authorList>
    </citation>
    <scope>NUCLEOTIDE SEQUENCE [LARGE SCALE GENOMIC DNA]</scope>
    <source>
        <strain>cv. PA64s</strain>
    </source>
</reference>
<sequence length="353" mass="39573">MTIALGRVTKEENDLFDIMDDWLRRDRFVFVGWSGLLLFPCAYFALGGWFTGTTFVTSWYTHGLASSYLEGCNFLTAAVSTPANSLAHSLLLLWGPEAQGDFTRWCQLGGLWTFVALHGAFALIGFMLRQFELARSVQLRPYNAISFSGPIAVFVSVFLIYPLGQSGWFFAPSFGVAAIFRFILFFQGFHNWTLNPFHMMGVAGVLGAALLCAIHGATVENTLFEDGDGANTFRAFNPTQAEETYSMVTANRFWSQIFGVAFSNKRWLHFFMLFVPVTGLWMSAIGVVGLALNLRAYDFVSQEIRAAEDPEFETFYTKNILLNEGIRAWMAAQDQPHENLIFPEEVLPRGNAL</sequence>
<dbReference type="EC" id="1.10.3.9" evidence="2"/>
<dbReference type="EMBL" id="AY522331">
    <property type="protein sequence ID" value="AAS46171.1"/>
    <property type="status" value="ALT_INIT"/>
    <property type="molecule type" value="Genomic_DNA"/>
</dbReference>
<dbReference type="RefSeq" id="YP_009305289.1">
    <property type="nucleotide sequence ID" value="NC_031333.1"/>
</dbReference>
<dbReference type="SMR" id="P0C435"/>
<dbReference type="GeneID" id="29141336"/>
<dbReference type="GO" id="GO:0009535">
    <property type="term" value="C:chloroplast thylakoid membrane"/>
    <property type="evidence" value="ECO:0007669"/>
    <property type="project" value="UniProtKB-SubCell"/>
</dbReference>
<dbReference type="GO" id="GO:0009523">
    <property type="term" value="C:photosystem II"/>
    <property type="evidence" value="ECO:0007669"/>
    <property type="project" value="UniProtKB-KW"/>
</dbReference>
<dbReference type="GO" id="GO:0009536">
    <property type="term" value="C:plastid"/>
    <property type="evidence" value="ECO:0000305"/>
    <property type="project" value="Gramene"/>
</dbReference>
<dbReference type="GO" id="GO:0016168">
    <property type="term" value="F:chlorophyll binding"/>
    <property type="evidence" value="ECO:0007669"/>
    <property type="project" value="UniProtKB-UniRule"/>
</dbReference>
<dbReference type="GO" id="GO:0045156">
    <property type="term" value="F:electron transporter, transferring electrons within the cyclic electron transport pathway of photosynthesis activity"/>
    <property type="evidence" value="ECO:0007669"/>
    <property type="project" value="InterPro"/>
</dbReference>
<dbReference type="GO" id="GO:0005506">
    <property type="term" value="F:iron ion binding"/>
    <property type="evidence" value="ECO:0007669"/>
    <property type="project" value="UniProtKB-UniRule"/>
</dbReference>
<dbReference type="GO" id="GO:0010242">
    <property type="term" value="F:oxygen evolving activity"/>
    <property type="evidence" value="ECO:0007669"/>
    <property type="project" value="UniProtKB-EC"/>
</dbReference>
<dbReference type="GO" id="GO:0009772">
    <property type="term" value="P:photosynthetic electron transport in photosystem II"/>
    <property type="evidence" value="ECO:0007669"/>
    <property type="project" value="InterPro"/>
</dbReference>
<dbReference type="CDD" id="cd09288">
    <property type="entry name" value="Photosystem-II_D2"/>
    <property type="match status" value="1"/>
</dbReference>
<dbReference type="FunFam" id="1.20.85.10:FF:000001">
    <property type="entry name" value="photosystem II D2 protein-like"/>
    <property type="match status" value="1"/>
</dbReference>
<dbReference type="Gene3D" id="1.20.85.10">
    <property type="entry name" value="Photosystem II protein D1-like"/>
    <property type="match status" value="1"/>
</dbReference>
<dbReference type="HAMAP" id="MF_01383">
    <property type="entry name" value="PSII_PsbD_D2"/>
    <property type="match status" value="1"/>
</dbReference>
<dbReference type="InterPro" id="IPR055266">
    <property type="entry name" value="D1/D2"/>
</dbReference>
<dbReference type="InterPro" id="IPR036854">
    <property type="entry name" value="Photo_II_D1/D2_sf"/>
</dbReference>
<dbReference type="InterPro" id="IPR000484">
    <property type="entry name" value="Photo_RC_L/M"/>
</dbReference>
<dbReference type="InterPro" id="IPR055265">
    <property type="entry name" value="Photo_RC_L/M_CS"/>
</dbReference>
<dbReference type="InterPro" id="IPR005868">
    <property type="entry name" value="PSII_PsbD/D2"/>
</dbReference>
<dbReference type="NCBIfam" id="TIGR01152">
    <property type="entry name" value="psbD"/>
    <property type="match status" value="1"/>
</dbReference>
<dbReference type="PANTHER" id="PTHR33149:SF12">
    <property type="entry name" value="PHOTOSYSTEM II D2 PROTEIN"/>
    <property type="match status" value="1"/>
</dbReference>
<dbReference type="PANTHER" id="PTHR33149">
    <property type="entry name" value="PHOTOSYSTEM II PROTEIN D1"/>
    <property type="match status" value="1"/>
</dbReference>
<dbReference type="Pfam" id="PF00124">
    <property type="entry name" value="Photo_RC"/>
    <property type="match status" value="1"/>
</dbReference>
<dbReference type="PRINTS" id="PR00256">
    <property type="entry name" value="REACTNCENTRE"/>
</dbReference>
<dbReference type="SUPFAM" id="SSF81483">
    <property type="entry name" value="Bacterial photosystem II reaction centre, L and M subunits"/>
    <property type="match status" value="1"/>
</dbReference>
<dbReference type="PROSITE" id="PS00244">
    <property type="entry name" value="REACTION_CENTER"/>
    <property type="match status" value="1"/>
</dbReference>
<feature type="initiator methionine" description="Removed" evidence="1">
    <location>
        <position position="1"/>
    </location>
</feature>
<feature type="chain" id="PRO_0000090515" description="Photosystem II D2 protein">
    <location>
        <begin position="2"/>
        <end position="353"/>
    </location>
</feature>
<feature type="transmembrane region" description="Helical" evidence="2">
    <location>
        <begin position="41"/>
        <end position="61"/>
    </location>
</feature>
<feature type="transmembrane region" description="Helical" evidence="2">
    <location>
        <begin position="125"/>
        <end position="141"/>
    </location>
</feature>
<feature type="transmembrane region" description="Helical" evidence="2">
    <location>
        <begin position="153"/>
        <end position="166"/>
    </location>
</feature>
<feature type="transmembrane region" description="Helical" evidence="2">
    <location>
        <begin position="208"/>
        <end position="228"/>
    </location>
</feature>
<feature type="transmembrane region" description="Helical" evidence="2">
    <location>
        <begin position="279"/>
        <end position="295"/>
    </location>
</feature>
<feature type="binding site" description="axial binding residue" evidence="2">
    <location>
        <position position="118"/>
    </location>
    <ligand>
        <name>chlorophyll a</name>
        <dbReference type="ChEBI" id="CHEBI:58416"/>
        <label>ChlzD2</label>
    </ligand>
    <ligandPart>
        <name>Mg</name>
        <dbReference type="ChEBI" id="CHEBI:25107"/>
    </ligandPart>
</feature>
<feature type="binding site" evidence="2">
    <location>
        <position position="130"/>
    </location>
    <ligand>
        <name>pheophytin a</name>
        <dbReference type="ChEBI" id="CHEBI:136840"/>
        <label>D2</label>
    </ligand>
</feature>
<feature type="binding site" evidence="2">
    <location>
        <position position="143"/>
    </location>
    <ligand>
        <name>pheophytin a</name>
        <dbReference type="ChEBI" id="CHEBI:136840"/>
        <label>D2</label>
    </ligand>
</feature>
<feature type="binding site" description="axial binding residue" evidence="2">
    <location>
        <position position="198"/>
    </location>
    <ligand>
        <name>chlorophyll a</name>
        <dbReference type="ChEBI" id="CHEBI:58416"/>
        <label>PD2</label>
    </ligand>
    <ligandPart>
        <name>Mg</name>
        <dbReference type="ChEBI" id="CHEBI:25107"/>
    </ligandPart>
</feature>
<feature type="binding site" evidence="2">
    <location>
        <position position="215"/>
    </location>
    <ligand>
        <name>a plastoquinone</name>
        <dbReference type="ChEBI" id="CHEBI:17757"/>
        <label>Q(A)</label>
    </ligand>
</feature>
<feature type="binding site" evidence="2">
    <location>
        <position position="215"/>
    </location>
    <ligand>
        <name>Fe cation</name>
        <dbReference type="ChEBI" id="CHEBI:24875"/>
        <note>ligand shared with heterodimeric partner</note>
    </ligand>
</feature>
<feature type="binding site" evidence="2">
    <location>
        <position position="262"/>
    </location>
    <ligand>
        <name>a plastoquinone</name>
        <dbReference type="ChEBI" id="CHEBI:17757"/>
        <label>Q(A)</label>
    </ligand>
</feature>
<feature type="binding site" evidence="2">
    <location>
        <position position="269"/>
    </location>
    <ligand>
        <name>Fe cation</name>
        <dbReference type="ChEBI" id="CHEBI:24875"/>
        <note>ligand shared with heterodimeric partner</note>
    </ligand>
</feature>
<feature type="modified residue" description="N-acetylthreonine" evidence="1">
    <location>
        <position position="2"/>
    </location>
</feature>
<feature type="modified residue" description="Phosphothreonine" evidence="1">
    <location>
        <position position="2"/>
    </location>
</feature>